<protein>
    <recommendedName>
        <fullName evidence="1">tRNA (guanine-N(1)-)-methyltransferase</fullName>
        <ecNumber evidence="1">2.1.1.228</ecNumber>
    </recommendedName>
    <alternativeName>
        <fullName evidence="1">M1G-methyltransferase</fullName>
    </alternativeName>
    <alternativeName>
        <fullName evidence="1">tRNA [GM37] methyltransferase</fullName>
    </alternativeName>
</protein>
<keyword id="KW-0963">Cytoplasm</keyword>
<keyword id="KW-0489">Methyltransferase</keyword>
<keyword id="KW-0949">S-adenosyl-L-methionine</keyword>
<keyword id="KW-0808">Transferase</keyword>
<keyword id="KW-0819">tRNA processing</keyword>
<dbReference type="EC" id="2.1.1.228" evidence="1"/>
<dbReference type="EMBL" id="CP001083">
    <property type="protein sequence ID" value="ACQ54371.1"/>
    <property type="molecule type" value="Genomic_DNA"/>
</dbReference>
<dbReference type="RefSeq" id="WP_003362587.1">
    <property type="nucleotide sequence ID" value="NC_012658.1"/>
</dbReference>
<dbReference type="SMR" id="C3L0E3"/>
<dbReference type="KEGG" id="cbi:CLJ_B2670"/>
<dbReference type="HOGENOM" id="CLU_047363_0_1_9"/>
<dbReference type="Proteomes" id="UP000002333">
    <property type="component" value="Chromosome"/>
</dbReference>
<dbReference type="GO" id="GO:0005829">
    <property type="term" value="C:cytosol"/>
    <property type="evidence" value="ECO:0007669"/>
    <property type="project" value="TreeGrafter"/>
</dbReference>
<dbReference type="GO" id="GO:0052906">
    <property type="term" value="F:tRNA (guanine(37)-N1)-methyltransferase activity"/>
    <property type="evidence" value="ECO:0007669"/>
    <property type="project" value="UniProtKB-UniRule"/>
</dbReference>
<dbReference type="GO" id="GO:0002939">
    <property type="term" value="P:tRNA N1-guanine methylation"/>
    <property type="evidence" value="ECO:0007669"/>
    <property type="project" value="TreeGrafter"/>
</dbReference>
<dbReference type="CDD" id="cd18080">
    <property type="entry name" value="TrmD-like"/>
    <property type="match status" value="1"/>
</dbReference>
<dbReference type="FunFam" id="1.10.1270.20:FF:000001">
    <property type="entry name" value="tRNA (guanine-N(1)-)-methyltransferase"/>
    <property type="match status" value="1"/>
</dbReference>
<dbReference type="FunFam" id="3.40.1280.10:FF:000001">
    <property type="entry name" value="tRNA (guanine-N(1)-)-methyltransferase"/>
    <property type="match status" value="1"/>
</dbReference>
<dbReference type="Gene3D" id="3.40.1280.10">
    <property type="match status" value="1"/>
</dbReference>
<dbReference type="Gene3D" id="1.10.1270.20">
    <property type="entry name" value="tRNA(m1g37)methyltransferase, domain 2"/>
    <property type="match status" value="1"/>
</dbReference>
<dbReference type="HAMAP" id="MF_00605">
    <property type="entry name" value="TrmD"/>
    <property type="match status" value="1"/>
</dbReference>
<dbReference type="InterPro" id="IPR029028">
    <property type="entry name" value="Alpha/beta_knot_MTases"/>
</dbReference>
<dbReference type="InterPro" id="IPR023148">
    <property type="entry name" value="tRNA_m1G_MeTrfase_C_sf"/>
</dbReference>
<dbReference type="InterPro" id="IPR002649">
    <property type="entry name" value="tRNA_m1G_MeTrfase_TrmD"/>
</dbReference>
<dbReference type="InterPro" id="IPR029026">
    <property type="entry name" value="tRNA_m1G_MTases_N"/>
</dbReference>
<dbReference type="InterPro" id="IPR016009">
    <property type="entry name" value="tRNA_MeTrfase_TRMD/TRM10"/>
</dbReference>
<dbReference type="NCBIfam" id="NF000648">
    <property type="entry name" value="PRK00026.1"/>
    <property type="match status" value="1"/>
</dbReference>
<dbReference type="NCBIfam" id="TIGR00088">
    <property type="entry name" value="trmD"/>
    <property type="match status" value="1"/>
</dbReference>
<dbReference type="PANTHER" id="PTHR46417">
    <property type="entry name" value="TRNA (GUANINE-N(1)-)-METHYLTRANSFERASE"/>
    <property type="match status" value="1"/>
</dbReference>
<dbReference type="PANTHER" id="PTHR46417:SF1">
    <property type="entry name" value="TRNA (GUANINE-N(1)-)-METHYLTRANSFERASE"/>
    <property type="match status" value="1"/>
</dbReference>
<dbReference type="Pfam" id="PF01746">
    <property type="entry name" value="tRNA_m1G_MT"/>
    <property type="match status" value="1"/>
</dbReference>
<dbReference type="PIRSF" id="PIRSF000386">
    <property type="entry name" value="tRNA_mtase"/>
    <property type="match status" value="1"/>
</dbReference>
<dbReference type="SUPFAM" id="SSF75217">
    <property type="entry name" value="alpha/beta knot"/>
    <property type="match status" value="1"/>
</dbReference>
<accession>C3L0E3</accession>
<proteinExistence type="inferred from homology"/>
<sequence length="240" mass="27415">MRIDVLTLFPEMFSIFNHSIIGRAIGKEILKINTVNIRDYTIDKHKKVDDYPYGGGAGMVMAAQPIVDSIKTVKKENKGKVIFLGPKGKTFNQNLAKELAKEEELIFLCGHYEGIDERAYEYIDMEISLGDFVLTGGEMACIPIVDSICRLVDGVLKSSESYEDESFYNGLLEYPQYTRPPIYEGKAVPDVLLSGHHENIKKWRKAKSLMITKKVRPDLLKKYRLTEEDKKILKDFNKKL</sequence>
<evidence type="ECO:0000255" key="1">
    <source>
        <dbReference type="HAMAP-Rule" id="MF_00605"/>
    </source>
</evidence>
<gene>
    <name evidence="1" type="primary">trmD</name>
    <name type="ordered locus">CLJ_B2670</name>
</gene>
<organism>
    <name type="scientific">Clostridium botulinum (strain 657 / Type Ba4)</name>
    <dbReference type="NCBI Taxonomy" id="515621"/>
    <lineage>
        <taxon>Bacteria</taxon>
        <taxon>Bacillati</taxon>
        <taxon>Bacillota</taxon>
        <taxon>Clostridia</taxon>
        <taxon>Eubacteriales</taxon>
        <taxon>Clostridiaceae</taxon>
        <taxon>Clostridium</taxon>
    </lineage>
</organism>
<comment type="function">
    <text evidence="1">Specifically methylates guanosine-37 in various tRNAs.</text>
</comment>
<comment type="catalytic activity">
    <reaction evidence="1">
        <text>guanosine(37) in tRNA + S-adenosyl-L-methionine = N(1)-methylguanosine(37) in tRNA + S-adenosyl-L-homocysteine + H(+)</text>
        <dbReference type="Rhea" id="RHEA:36899"/>
        <dbReference type="Rhea" id="RHEA-COMP:10145"/>
        <dbReference type="Rhea" id="RHEA-COMP:10147"/>
        <dbReference type="ChEBI" id="CHEBI:15378"/>
        <dbReference type="ChEBI" id="CHEBI:57856"/>
        <dbReference type="ChEBI" id="CHEBI:59789"/>
        <dbReference type="ChEBI" id="CHEBI:73542"/>
        <dbReference type="ChEBI" id="CHEBI:74269"/>
        <dbReference type="EC" id="2.1.1.228"/>
    </reaction>
</comment>
<comment type="subunit">
    <text evidence="1">Homodimer.</text>
</comment>
<comment type="subcellular location">
    <subcellularLocation>
        <location evidence="1">Cytoplasm</location>
    </subcellularLocation>
</comment>
<comment type="similarity">
    <text evidence="1">Belongs to the RNA methyltransferase TrmD family.</text>
</comment>
<name>TRMD_CLOB6</name>
<reference key="1">
    <citation type="submission" date="2008-05" db="EMBL/GenBank/DDBJ databases">
        <title>Genome sequence of Clostridium botulinum Ba4 strain 657.</title>
        <authorList>
            <person name="Shrivastava S."/>
            <person name="Brown J.L."/>
            <person name="Bruce D."/>
            <person name="Detter C."/>
            <person name="Munk C."/>
            <person name="Smith L.A."/>
            <person name="Smith T.J."/>
            <person name="Sutton G."/>
            <person name="Brettin T.S."/>
        </authorList>
    </citation>
    <scope>NUCLEOTIDE SEQUENCE [LARGE SCALE GENOMIC DNA]</scope>
    <source>
        <strain>657 / Type Ba4</strain>
    </source>
</reference>
<feature type="chain" id="PRO_1000212221" description="tRNA (guanine-N(1)-)-methyltransferase">
    <location>
        <begin position="1"/>
        <end position="240"/>
    </location>
</feature>
<feature type="binding site" evidence="1">
    <location>
        <position position="110"/>
    </location>
    <ligand>
        <name>S-adenosyl-L-methionine</name>
        <dbReference type="ChEBI" id="CHEBI:59789"/>
    </ligand>
</feature>
<feature type="binding site" evidence="1">
    <location>
        <begin position="129"/>
        <end position="134"/>
    </location>
    <ligand>
        <name>S-adenosyl-L-methionine</name>
        <dbReference type="ChEBI" id="CHEBI:59789"/>
    </ligand>
</feature>